<keyword id="KW-0413">Isomerase</keyword>
<keyword id="KW-1185">Reference proteome</keyword>
<proteinExistence type="inferred from homology"/>
<evidence type="ECO:0000255" key="1">
    <source>
        <dbReference type="HAMAP-Rule" id="MF_00170"/>
    </source>
</evidence>
<sequence>MKQAGGSAEQKRRAGEAAVAEEVTEGAVVGLGTGSTVAHAIRALGAEASDVSGVATSFESRRRAVDAGVTVTSLEAASVDVAIDGADQVADGVLVKGGGAAHTREKYVAASADRFVVVADPSKESDVVDVPVPVAVVPDAWPVVVDRVEALGGTATLRDAERKDGPVVTDTGSLVVDCDFGAIETPEAVAASLSAVPGVVEHGLFVGMADAVYVGTDDGVRVRDP</sequence>
<feature type="chain" id="PRO_0000158508" description="Ribose-5-phosphate isomerase A">
    <location>
        <begin position="1"/>
        <end position="225"/>
    </location>
</feature>
<feature type="active site" description="Proton acceptor" evidence="1">
    <location>
        <position position="105"/>
    </location>
</feature>
<feature type="binding site" evidence="1">
    <location>
        <begin position="33"/>
        <end position="36"/>
    </location>
    <ligand>
        <name>substrate</name>
    </ligand>
</feature>
<feature type="binding site" evidence="1">
    <location>
        <begin position="84"/>
        <end position="87"/>
    </location>
    <ligand>
        <name>substrate</name>
    </ligand>
</feature>
<feature type="binding site" evidence="1">
    <location>
        <begin position="96"/>
        <end position="99"/>
    </location>
    <ligand>
        <name>substrate</name>
    </ligand>
</feature>
<feature type="binding site" evidence="1">
    <location>
        <position position="123"/>
    </location>
    <ligand>
        <name>substrate</name>
    </ligand>
</feature>
<reference key="1">
    <citation type="journal article" date="2000" name="Proc. Natl. Acad. Sci. U.S.A.">
        <title>Genome sequence of Halobacterium species NRC-1.</title>
        <authorList>
            <person name="Ng W.V."/>
            <person name="Kennedy S.P."/>
            <person name="Mahairas G.G."/>
            <person name="Berquist B."/>
            <person name="Pan M."/>
            <person name="Shukla H.D."/>
            <person name="Lasky S.R."/>
            <person name="Baliga N.S."/>
            <person name="Thorsson V."/>
            <person name="Sbrogna J."/>
            <person name="Swartzell S."/>
            <person name="Weir D."/>
            <person name="Hall J."/>
            <person name="Dahl T.A."/>
            <person name="Welti R."/>
            <person name="Goo Y.A."/>
            <person name="Leithauser B."/>
            <person name="Keller K."/>
            <person name="Cruz R."/>
            <person name="Danson M.J."/>
            <person name="Hough D.W."/>
            <person name="Maddocks D.G."/>
            <person name="Jablonski P.E."/>
            <person name="Krebs M.P."/>
            <person name="Angevine C.M."/>
            <person name="Dale H."/>
            <person name="Isenbarger T.A."/>
            <person name="Peck R.F."/>
            <person name="Pohlschroder M."/>
            <person name="Spudich J.L."/>
            <person name="Jung K.-H."/>
            <person name="Alam M."/>
            <person name="Freitas T."/>
            <person name="Hou S."/>
            <person name="Daniels C.J."/>
            <person name="Dennis P.P."/>
            <person name="Omer A.D."/>
            <person name="Ebhardt H."/>
            <person name="Lowe T.M."/>
            <person name="Liang P."/>
            <person name="Riley M."/>
            <person name="Hood L."/>
            <person name="DasSarma S."/>
        </authorList>
    </citation>
    <scope>NUCLEOTIDE SEQUENCE [LARGE SCALE GENOMIC DNA]</scope>
    <source>
        <strain>ATCC 700922 / JCM 11081 / NRC-1</strain>
    </source>
</reference>
<organism>
    <name type="scientific">Halobacterium salinarum (strain ATCC 700922 / JCM 11081 / NRC-1)</name>
    <name type="common">Halobacterium halobium</name>
    <dbReference type="NCBI Taxonomy" id="64091"/>
    <lineage>
        <taxon>Archaea</taxon>
        <taxon>Methanobacteriati</taxon>
        <taxon>Methanobacteriota</taxon>
        <taxon>Stenosarchaea group</taxon>
        <taxon>Halobacteria</taxon>
        <taxon>Halobacteriales</taxon>
        <taxon>Halobacteriaceae</taxon>
        <taxon>Halobacterium</taxon>
        <taxon>Halobacterium salinarum NRC-34001</taxon>
    </lineage>
</organism>
<gene>
    <name evidence="1" type="primary">rpiA</name>
    <name type="synonym">rpi</name>
    <name type="ordered locus">VNG_2272G</name>
</gene>
<name>RPIA_HALSA</name>
<protein>
    <recommendedName>
        <fullName evidence="1">Ribose-5-phosphate isomerase A</fullName>
        <ecNumber evidence="1">5.3.1.6</ecNumber>
    </recommendedName>
    <alternativeName>
        <fullName evidence="1">Phosphoriboisomerase A</fullName>
        <shortName evidence="1">PRI</shortName>
    </alternativeName>
</protein>
<comment type="function">
    <text evidence="1">Catalyzes the reversible conversion of ribose-5-phosphate to ribulose 5-phosphate.</text>
</comment>
<comment type="catalytic activity">
    <reaction evidence="1">
        <text>aldehydo-D-ribose 5-phosphate = D-ribulose 5-phosphate</text>
        <dbReference type="Rhea" id="RHEA:14657"/>
        <dbReference type="ChEBI" id="CHEBI:58121"/>
        <dbReference type="ChEBI" id="CHEBI:58273"/>
        <dbReference type="EC" id="5.3.1.6"/>
    </reaction>
</comment>
<comment type="pathway">
    <text evidence="1">Carbohydrate degradation; pentose phosphate pathway; D-ribose 5-phosphate from D-ribulose 5-phosphate (non-oxidative stage): step 1/1.</text>
</comment>
<comment type="subunit">
    <text evidence="1">Homodimer.</text>
</comment>
<comment type="similarity">
    <text evidence="1">Belongs to the ribose 5-phosphate isomerase family.</text>
</comment>
<dbReference type="EC" id="5.3.1.6" evidence="1"/>
<dbReference type="EMBL" id="AE004437">
    <property type="protein sequence ID" value="AAG20388.1"/>
    <property type="molecule type" value="Genomic_DNA"/>
</dbReference>
<dbReference type="PIR" id="H84377">
    <property type="entry name" value="H84377"/>
</dbReference>
<dbReference type="RefSeq" id="WP_010903689.1">
    <property type="nucleotide sequence ID" value="NC_002607.1"/>
</dbReference>
<dbReference type="SMR" id="Q9HN33"/>
<dbReference type="FunCoup" id="Q9HN33">
    <property type="interactions" value="199"/>
</dbReference>
<dbReference type="STRING" id="64091.VNG_2272G"/>
<dbReference type="PaxDb" id="64091-VNG_2272G"/>
<dbReference type="GeneID" id="68694820"/>
<dbReference type="KEGG" id="hal:VNG_2272G"/>
<dbReference type="PATRIC" id="fig|64091.14.peg.1750"/>
<dbReference type="HOGENOM" id="CLU_056590_1_1_2"/>
<dbReference type="InParanoid" id="Q9HN33"/>
<dbReference type="OrthoDB" id="19013at2157"/>
<dbReference type="PhylomeDB" id="Q9HN33"/>
<dbReference type="UniPathway" id="UPA00115">
    <property type="reaction ID" value="UER00412"/>
</dbReference>
<dbReference type="Proteomes" id="UP000000554">
    <property type="component" value="Chromosome"/>
</dbReference>
<dbReference type="GO" id="GO:0005829">
    <property type="term" value="C:cytosol"/>
    <property type="evidence" value="ECO:0000318"/>
    <property type="project" value="GO_Central"/>
</dbReference>
<dbReference type="GO" id="GO:0004751">
    <property type="term" value="F:ribose-5-phosphate isomerase activity"/>
    <property type="evidence" value="ECO:0000318"/>
    <property type="project" value="GO_Central"/>
</dbReference>
<dbReference type="GO" id="GO:0006014">
    <property type="term" value="P:D-ribose metabolic process"/>
    <property type="evidence" value="ECO:0000318"/>
    <property type="project" value="GO_Central"/>
</dbReference>
<dbReference type="GO" id="GO:0009052">
    <property type="term" value="P:pentose-phosphate shunt, non-oxidative branch"/>
    <property type="evidence" value="ECO:0000318"/>
    <property type="project" value="GO_Central"/>
</dbReference>
<dbReference type="CDD" id="cd01398">
    <property type="entry name" value="RPI_A"/>
    <property type="match status" value="1"/>
</dbReference>
<dbReference type="FunFam" id="3.30.70.260:FF:000018">
    <property type="entry name" value="Ribose-5-phosphate isomerase A"/>
    <property type="match status" value="1"/>
</dbReference>
<dbReference type="Gene3D" id="3.30.70.260">
    <property type="match status" value="1"/>
</dbReference>
<dbReference type="Gene3D" id="3.40.50.1360">
    <property type="match status" value="1"/>
</dbReference>
<dbReference type="HAMAP" id="MF_00170">
    <property type="entry name" value="Rib_5P_isom_A"/>
    <property type="match status" value="1"/>
</dbReference>
<dbReference type="InterPro" id="IPR037171">
    <property type="entry name" value="NagB/RpiA_transferase-like"/>
</dbReference>
<dbReference type="InterPro" id="IPR020672">
    <property type="entry name" value="Ribose5P_isomerase_typA_subgr"/>
</dbReference>
<dbReference type="InterPro" id="IPR004788">
    <property type="entry name" value="Ribose5P_isomerase_type_A"/>
</dbReference>
<dbReference type="NCBIfam" id="NF001924">
    <property type="entry name" value="PRK00702.1"/>
    <property type="match status" value="1"/>
</dbReference>
<dbReference type="NCBIfam" id="TIGR00021">
    <property type="entry name" value="rpiA"/>
    <property type="match status" value="1"/>
</dbReference>
<dbReference type="PANTHER" id="PTHR11934">
    <property type="entry name" value="RIBOSE-5-PHOSPHATE ISOMERASE"/>
    <property type="match status" value="1"/>
</dbReference>
<dbReference type="PANTHER" id="PTHR11934:SF0">
    <property type="entry name" value="RIBOSE-5-PHOSPHATE ISOMERASE"/>
    <property type="match status" value="1"/>
</dbReference>
<dbReference type="Pfam" id="PF06026">
    <property type="entry name" value="Rib_5-P_isom_A"/>
    <property type="match status" value="1"/>
</dbReference>
<dbReference type="SUPFAM" id="SSF75445">
    <property type="entry name" value="D-ribose-5-phosphate isomerase (RpiA), lid domain"/>
    <property type="match status" value="1"/>
</dbReference>
<dbReference type="SUPFAM" id="SSF100950">
    <property type="entry name" value="NagB/RpiA/CoA transferase-like"/>
    <property type="match status" value="1"/>
</dbReference>
<accession>Q9HN33</accession>